<sequence length="115" mass="13576">MTRVKRGNVARKRRKKILKITKGFRGSSSTLFRTANQQQMKALRYSYRDRLTRKRNFRALWIVRINAMARHLGLNYNQFINNITKAQIIINRKTLSQLAIYDSTIFSSLISIKNN</sequence>
<reference key="1">
    <citation type="journal article" date="2007" name="BMC Genomics">
        <title>The chloroplast genome sequence of the green alga Leptosira terrestris: multiple losses of the inverted repeat and extensive genome rearrangements within the Trebouxiophyceae.</title>
        <authorList>
            <person name="de Cambiaire J.-C."/>
            <person name="Otis C."/>
            <person name="Turmel M."/>
            <person name="Lemieux C."/>
        </authorList>
    </citation>
    <scope>NUCLEOTIDE SEQUENCE [LARGE SCALE GENOMIC DNA]</scope>
    <source>
        <strain>CCAP 463/2 / UTEX 333</strain>
    </source>
</reference>
<organism>
    <name type="scientific">Pleurastrum terricola</name>
    <name type="common">Filamentous green alga</name>
    <name type="synonym">Leptosira terrestris</name>
    <dbReference type="NCBI Taxonomy" id="34116"/>
    <lineage>
        <taxon>Eukaryota</taxon>
        <taxon>Viridiplantae</taxon>
        <taxon>Chlorophyta</taxon>
        <taxon>core chlorophytes</taxon>
        <taxon>Chlorophyceae</taxon>
        <taxon>CS clade</taxon>
        <taxon>Chlamydomonadales</taxon>
        <taxon>Pleurastraceae</taxon>
        <taxon>Pleurastrum</taxon>
    </lineage>
</organism>
<protein>
    <recommendedName>
        <fullName evidence="1">Large ribosomal subunit protein bL20c</fullName>
    </recommendedName>
    <alternativeName>
        <fullName evidence="2">50S ribosomal protein L20, chloroplastic</fullName>
    </alternativeName>
</protein>
<evidence type="ECO:0000255" key="1">
    <source>
        <dbReference type="HAMAP-Rule" id="MF_00382"/>
    </source>
</evidence>
<evidence type="ECO:0000305" key="2"/>
<keyword id="KW-0150">Chloroplast</keyword>
<keyword id="KW-0934">Plastid</keyword>
<keyword id="KW-0687">Ribonucleoprotein</keyword>
<keyword id="KW-0689">Ribosomal protein</keyword>
<keyword id="KW-0694">RNA-binding</keyword>
<keyword id="KW-0699">rRNA-binding</keyword>
<dbReference type="EMBL" id="EF506945">
    <property type="protein sequence ID" value="ABO69317.1"/>
    <property type="molecule type" value="Genomic_DNA"/>
</dbReference>
<dbReference type="RefSeq" id="YP_001382178.1">
    <property type="nucleotide sequence ID" value="NC_009681.1"/>
</dbReference>
<dbReference type="SMR" id="A6YGA1"/>
<dbReference type="GeneID" id="5383750"/>
<dbReference type="GO" id="GO:0009507">
    <property type="term" value="C:chloroplast"/>
    <property type="evidence" value="ECO:0007669"/>
    <property type="project" value="UniProtKB-SubCell"/>
</dbReference>
<dbReference type="GO" id="GO:1990904">
    <property type="term" value="C:ribonucleoprotein complex"/>
    <property type="evidence" value="ECO:0007669"/>
    <property type="project" value="UniProtKB-KW"/>
</dbReference>
<dbReference type="GO" id="GO:0005840">
    <property type="term" value="C:ribosome"/>
    <property type="evidence" value="ECO:0007669"/>
    <property type="project" value="UniProtKB-KW"/>
</dbReference>
<dbReference type="GO" id="GO:0019843">
    <property type="term" value="F:rRNA binding"/>
    <property type="evidence" value="ECO:0007669"/>
    <property type="project" value="UniProtKB-UniRule"/>
</dbReference>
<dbReference type="GO" id="GO:0003735">
    <property type="term" value="F:structural constituent of ribosome"/>
    <property type="evidence" value="ECO:0007669"/>
    <property type="project" value="InterPro"/>
</dbReference>
<dbReference type="GO" id="GO:0000027">
    <property type="term" value="P:ribosomal large subunit assembly"/>
    <property type="evidence" value="ECO:0007669"/>
    <property type="project" value="UniProtKB-UniRule"/>
</dbReference>
<dbReference type="GO" id="GO:0006412">
    <property type="term" value="P:translation"/>
    <property type="evidence" value="ECO:0007669"/>
    <property type="project" value="InterPro"/>
</dbReference>
<dbReference type="CDD" id="cd07026">
    <property type="entry name" value="Ribosomal_L20"/>
    <property type="match status" value="1"/>
</dbReference>
<dbReference type="FunFam" id="1.10.1900.20:FF:000001">
    <property type="entry name" value="50S ribosomal protein L20"/>
    <property type="match status" value="1"/>
</dbReference>
<dbReference type="Gene3D" id="6.10.160.10">
    <property type="match status" value="1"/>
</dbReference>
<dbReference type="Gene3D" id="1.10.1900.20">
    <property type="entry name" value="Ribosomal protein L20"/>
    <property type="match status" value="1"/>
</dbReference>
<dbReference type="HAMAP" id="MF_00382">
    <property type="entry name" value="Ribosomal_bL20"/>
    <property type="match status" value="1"/>
</dbReference>
<dbReference type="InterPro" id="IPR005813">
    <property type="entry name" value="Ribosomal_bL20"/>
</dbReference>
<dbReference type="InterPro" id="IPR049946">
    <property type="entry name" value="RIBOSOMAL_L20_CS"/>
</dbReference>
<dbReference type="InterPro" id="IPR035566">
    <property type="entry name" value="Ribosomal_protein_bL20_C"/>
</dbReference>
<dbReference type="NCBIfam" id="TIGR01032">
    <property type="entry name" value="rplT_bact"/>
    <property type="match status" value="1"/>
</dbReference>
<dbReference type="PANTHER" id="PTHR10986">
    <property type="entry name" value="39S RIBOSOMAL PROTEIN L20"/>
    <property type="match status" value="1"/>
</dbReference>
<dbReference type="Pfam" id="PF00453">
    <property type="entry name" value="Ribosomal_L20"/>
    <property type="match status" value="1"/>
</dbReference>
<dbReference type="PRINTS" id="PR00062">
    <property type="entry name" value="RIBOSOMALL20"/>
</dbReference>
<dbReference type="SUPFAM" id="SSF74731">
    <property type="entry name" value="Ribosomal protein L20"/>
    <property type="match status" value="1"/>
</dbReference>
<dbReference type="PROSITE" id="PS00937">
    <property type="entry name" value="RIBOSOMAL_L20"/>
    <property type="match status" value="1"/>
</dbReference>
<comment type="function">
    <text evidence="1">Binds directly to 23S ribosomal RNA and is necessary for the in vitro assembly process of the 50S ribosomal subunit. It is not involved in the protein synthesizing functions of that subunit.</text>
</comment>
<comment type="subcellular location">
    <subcellularLocation>
        <location>Plastid</location>
        <location>Chloroplast</location>
    </subcellularLocation>
</comment>
<comment type="similarity">
    <text evidence="1">Belongs to the bacterial ribosomal protein bL20 family.</text>
</comment>
<name>RK20_PLETE</name>
<accession>A6YGA1</accession>
<feature type="chain" id="PRO_0000355511" description="Large ribosomal subunit protein bL20c">
    <location>
        <begin position="1"/>
        <end position="115"/>
    </location>
</feature>
<geneLocation type="chloroplast"/>
<proteinExistence type="inferred from homology"/>
<gene>
    <name evidence="1" type="primary">rpl20</name>
</gene>